<name>DER_YERP3</name>
<sequence length="495" mass="55007">MIPVIALVGRPNVGKSTLFNRLTHTRDALVADFPGLTRDRKYGRAEVEGHEFIVVDTGGIDGTEDGVETKMAGQSLLAIEEADIVLFMVDARAGLMPADQGIAQHLRSREKATFLVANKTDGIDPDTATADFYSLGLGEVHAIAASHGRGVTQLIEDVMAPYMDAEEPEVELTEEEENAAYWAEQEAQGEDVPPEDPEDDFDPRTLPIKLAIVGRPNVGKSTLTNRILGEDRVVVYDMPGTTRDSIYIPMTRDDREYILIDTAGVRKRGKITETVEKFSVIKTLQAIEDSNVVLLVIDARDGISDQDLSLLGFILNSGRSLVIAVNKWDGMTEEARAQVKDMLDLRLGFVDFARIHFISALHGSGVGNLFESVQEAYDCSTKRVGTSLLTRIMQMAEEDHQPPLVRGRRVKLKYAHAGGYNPPIVVIHGNQVTDLSDSYKRYLMNYFRRSLKVMGTPIRIQFKEGENPFAGKRNPLTPNQMRKRKRLMSHLKKGK</sequence>
<proteinExistence type="inferred from homology"/>
<feature type="chain" id="PRO_1000058529" description="GTPase Der">
    <location>
        <begin position="1"/>
        <end position="495"/>
    </location>
</feature>
<feature type="domain" description="EngA-type G 1">
    <location>
        <begin position="3"/>
        <end position="166"/>
    </location>
</feature>
<feature type="domain" description="EngA-type G 2">
    <location>
        <begin position="208"/>
        <end position="381"/>
    </location>
</feature>
<feature type="domain" description="KH-like" evidence="1">
    <location>
        <begin position="382"/>
        <end position="466"/>
    </location>
</feature>
<feature type="binding site" evidence="1">
    <location>
        <begin position="9"/>
        <end position="16"/>
    </location>
    <ligand>
        <name>GTP</name>
        <dbReference type="ChEBI" id="CHEBI:37565"/>
        <label>1</label>
    </ligand>
</feature>
<feature type="binding site" evidence="1">
    <location>
        <begin position="56"/>
        <end position="60"/>
    </location>
    <ligand>
        <name>GTP</name>
        <dbReference type="ChEBI" id="CHEBI:37565"/>
        <label>1</label>
    </ligand>
</feature>
<feature type="binding site" evidence="1">
    <location>
        <begin position="118"/>
        <end position="121"/>
    </location>
    <ligand>
        <name>GTP</name>
        <dbReference type="ChEBI" id="CHEBI:37565"/>
        <label>1</label>
    </ligand>
</feature>
<feature type="binding site" evidence="1">
    <location>
        <begin position="214"/>
        <end position="221"/>
    </location>
    <ligand>
        <name>GTP</name>
        <dbReference type="ChEBI" id="CHEBI:37565"/>
        <label>2</label>
    </ligand>
</feature>
<feature type="binding site" evidence="1">
    <location>
        <begin position="261"/>
        <end position="265"/>
    </location>
    <ligand>
        <name>GTP</name>
        <dbReference type="ChEBI" id="CHEBI:37565"/>
        <label>2</label>
    </ligand>
</feature>
<feature type="binding site" evidence="1">
    <location>
        <begin position="326"/>
        <end position="329"/>
    </location>
    <ligand>
        <name>GTP</name>
        <dbReference type="ChEBI" id="CHEBI:37565"/>
        <label>2</label>
    </ligand>
</feature>
<comment type="function">
    <text evidence="1">GTPase that plays an essential role in the late steps of ribosome biogenesis.</text>
</comment>
<comment type="subunit">
    <text evidence="1">Associates with the 50S ribosomal subunit.</text>
</comment>
<comment type="similarity">
    <text evidence="1">Belongs to the TRAFAC class TrmE-Era-EngA-EngB-Septin-like GTPase superfamily. EngA (Der) GTPase family.</text>
</comment>
<gene>
    <name evidence="1" type="primary">der</name>
    <name type="synonym">engA</name>
    <name type="ordered locus">YpsIP31758_1190</name>
</gene>
<keyword id="KW-0342">GTP-binding</keyword>
<keyword id="KW-0547">Nucleotide-binding</keyword>
<keyword id="KW-0677">Repeat</keyword>
<keyword id="KW-0690">Ribosome biogenesis</keyword>
<reference key="1">
    <citation type="journal article" date="2007" name="PLoS Genet.">
        <title>The complete genome sequence of Yersinia pseudotuberculosis IP31758, the causative agent of Far East scarlet-like fever.</title>
        <authorList>
            <person name="Eppinger M."/>
            <person name="Rosovitz M.J."/>
            <person name="Fricke W.F."/>
            <person name="Rasko D.A."/>
            <person name="Kokorina G."/>
            <person name="Fayolle C."/>
            <person name="Lindler L.E."/>
            <person name="Carniel E."/>
            <person name="Ravel J."/>
        </authorList>
    </citation>
    <scope>NUCLEOTIDE SEQUENCE [LARGE SCALE GENOMIC DNA]</scope>
    <source>
        <strain>IP 31758</strain>
    </source>
</reference>
<organism>
    <name type="scientific">Yersinia pseudotuberculosis serotype O:1b (strain IP 31758)</name>
    <dbReference type="NCBI Taxonomy" id="349747"/>
    <lineage>
        <taxon>Bacteria</taxon>
        <taxon>Pseudomonadati</taxon>
        <taxon>Pseudomonadota</taxon>
        <taxon>Gammaproteobacteria</taxon>
        <taxon>Enterobacterales</taxon>
        <taxon>Yersiniaceae</taxon>
        <taxon>Yersinia</taxon>
    </lineage>
</organism>
<dbReference type="EMBL" id="CP000720">
    <property type="protein sequence ID" value="ABS47021.1"/>
    <property type="molecule type" value="Genomic_DNA"/>
</dbReference>
<dbReference type="RefSeq" id="WP_002209813.1">
    <property type="nucleotide sequence ID" value="NC_009708.1"/>
</dbReference>
<dbReference type="SMR" id="A7FFZ3"/>
<dbReference type="GeneID" id="57975832"/>
<dbReference type="KEGG" id="ypi:YpsIP31758_1190"/>
<dbReference type="HOGENOM" id="CLU_016077_6_2_6"/>
<dbReference type="Proteomes" id="UP000002412">
    <property type="component" value="Chromosome"/>
</dbReference>
<dbReference type="GO" id="GO:0005525">
    <property type="term" value="F:GTP binding"/>
    <property type="evidence" value="ECO:0007669"/>
    <property type="project" value="UniProtKB-UniRule"/>
</dbReference>
<dbReference type="GO" id="GO:0043022">
    <property type="term" value="F:ribosome binding"/>
    <property type="evidence" value="ECO:0007669"/>
    <property type="project" value="TreeGrafter"/>
</dbReference>
<dbReference type="GO" id="GO:0042254">
    <property type="term" value="P:ribosome biogenesis"/>
    <property type="evidence" value="ECO:0007669"/>
    <property type="project" value="UniProtKB-KW"/>
</dbReference>
<dbReference type="CDD" id="cd01894">
    <property type="entry name" value="EngA1"/>
    <property type="match status" value="1"/>
</dbReference>
<dbReference type="CDD" id="cd01895">
    <property type="entry name" value="EngA2"/>
    <property type="match status" value="1"/>
</dbReference>
<dbReference type="FunFam" id="3.30.300.20:FF:000004">
    <property type="entry name" value="GTPase Der"/>
    <property type="match status" value="1"/>
</dbReference>
<dbReference type="FunFam" id="3.40.50.300:FF:000040">
    <property type="entry name" value="GTPase Der"/>
    <property type="match status" value="1"/>
</dbReference>
<dbReference type="FunFam" id="3.40.50.300:FF:000057">
    <property type="entry name" value="GTPase Der"/>
    <property type="match status" value="1"/>
</dbReference>
<dbReference type="Gene3D" id="3.30.300.20">
    <property type="match status" value="1"/>
</dbReference>
<dbReference type="Gene3D" id="3.40.50.300">
    <property type="entry name" value="P-loop containing nucleotide triphosphate hydrolases"/>
    <property type="match status" value="2"/>
</dbReference>
<dbReference type="HAMAP" id="MF_00195">
    <property type="entry name" value="GTPase_Der"/>
    <property type="match status" value="1"/>
</dbReference>
<dbReference type="InterPro" id="IPR031166">
    <property type="entry name" value="G_ENGA"/>
</dbReference>
<dbReference type="InterPro" id="IPR006073">
    <property type="entry name" value="GTP-bd"/>
</dbReference>
<dbReference type="InterPro" id="IPR016484">
    <property type="entry name" value="GTPase_Der"/>
</dbReference>
<dbReference type="InterPro" id="IPR032859">
    <property type="entry name" value="KH_dom-like"/>
</dbReference>
<dbReference type="InterPro" id="IPR015946">
    <property type="entry name" value="KH_dom-like_a/b"/>
</dbReference>
<dbReference type="InterPro" id="IPR027417">
    <property type="entry name" value="P-loop_NTPase"/>
</dbReference>
<dbReference type="InterPro" id="IPR005225">
    <property type="entry name" value="Small_GTP-bd"/>
</dbReference>
<dbReference type="NCBIfam" id="TIGR03594">
    <property type="entry name" value="GTPase_EngA"/>
    <property type="match status" value="1"/>
</dbReference>
<dbReference type="NCBIfam" id="TIGR00231">
    <property type="entry name" value="small_GTP"/>
    <property type="match status" value="2"/>
</dbReference>
<dbReference type="PANTHER" id="PTHR43834">
    <property type="entry name" value="GTPASE DER"/>
    <property type="match status" value="1"/>
</dbReference>
<dbReference type="PANTHER" id="PTHR43834:SF6">
    <property type="entry name" value="GTPASE DER"/>
    <property type="match status" value="1"/>
</dbReference>
<dbReference type="Pfam" id="PF14714">
    <property type="entry name" value="KH_dom-like"/>
    <property type="match status" value="1"/>
</dbReference>
<dbReference type="Pfam" id="PF01926">
    <property type="entry name" value="MMR_HSR1"/>
    <property type="match status" value="2"/>
</dbReference>
<dbReference type="PIRSF" id="PIRSF006485">
    <property type="entry name" value="GTP-binding_EngA"/>
    <property type="match status" value="1"/>
</dbReference>
<dbReference type="PRINTS" id="PR00326">
    <property type="entry name" value="GTP1OBG"/>
</dbReference>
<dbReference type="SUPFAM" id="SSF52540">
    <property type="entry name" value="P-loop containing nucleoside triphosphate hydrolases"/>
    <property type="match status" value="2"/>
</dbReference>
<dbReference type="PROSITE" id="PS51712">
    <property type="entry name" value="G_ENGA"/>
    <property type="match status" value="2"/>
</dbReference>
<evidence type="ECO:0000255" key="1">
    <source>
        <dbReference type="HAMAP-Rule" id="MF_00195"/>
    </source>
</evidence>
<protein>
    <recommendedName>
        <fullName evidence="1">GTPase Der</fullName>
    </recommendedName>
    <alternativeName>
        <fullName evidence="1">GTP-binding protein EngA</fullName>
    </alternativeName>
</protein>
<accession>A7FFZ3</accession>